<comment type="function">
    <text evidence="1">Catalyzes the NAD-dependent oxidative cleavage of spermidine and the subsequent transfer of the butylamine moiety of spermidine to the epsilon-amino group of a specific lysine residue of the eIF-5A precursor protein to form the intermediate deoxyhypusine residue.</text>
</comment>
<comment type="catalytic activity">
    <reaction>
        <text>[eIF5A protein]-L-lysine + spermidine = [eIF5A protein]-deoxyhypusine + propane-1,3-diamine</text>
        <dbReference type="Rhea" id="RHEA:33299"/>
        <dbReference type="Rhea" id="RHEA-COMP:10143"/>
        <dbReference type="Rhea" id="RHEA-COMP:10144"/>
        <dbReference type="ChEBI" id="CHEBI:29969"/>
        <dbReference type="ChEBI" id="CHEBI:57484"/>
        <dbReference type="ChEBI" id="CHEBI:57834"/>
        <dbReference type="ChEBI" id="CHEBI:82657"/>
        <dbReference type="EC" id="2.5.1.46"/>
    </reaction>
</comment>
<comment type="cofactor">
    <cofactor evidence="1">
        <name>NAD(+)</name>
        <dbReference type="ChEBI" id="CHEBI:57540"/>
    </cofactor>
</comment>
<comment type="pathway">
    <text>Protein modification; eIF5A hypusination.</text>
</comment>
<comment type="similarity">
    <text evidence="2">Belongs to the deoxyhypusine synthase family.</text>
</comment>
<evidence type="ECO:0000250" key="1"/>
<evidence type="ECO:0000305" key="2"/>
<organism>
    <name type="scientific">Candida glabrata (strain ATCC 2001 / BCRC 20586 / JCM 3761 / NBRC 0622 / NRRL Y-65 / CBS 138)</name>
    <name type="common">Yeast</name>
    <name type="synonym">Nakaseomyces glabratus</name>
    <dbReference type="NCBI Taxonomy" id="284593"/>
    <lineage>
        <taxon>Eukaryota</taxon>
        <taxon>Fungi</taxon>
        <taxon>Dikarya</taxon>
        <taxon>Ascomycota</taxon>
        <taxon>Saccharomycotina</taxon>
        <taxon>Saccharomycetes</taxon>
        <taxon>Saccharomycetales</taxon>
        <taxon>Saccharomycetaceae</taxon>
        <taxon>Nakaseomyces</taxon>
    </lineage>
</organism>
<proteinExistence type="inferred from homology"/>
<sequence length="385" mass="42442">MSAANDKLPDILQDAVLKASVPVPDDFVQVKGIDYSAATATDMRASDLVNSMKTMGFQASSLGKACDIIDEMRSWRGKHIDELDEHDRKGQFDDAGYQKTTVFMGYTSNLISSGLRETLRYLVQHKMVDALVATAGGIEEDIIKCLAPTYLGEFSLEGKSLRDQGMNRIGNLLVPNDNYCKFEEWIVPIFDKMLEEQEEYVAKHGKDCLDANTDVDSPIWTPSKLIDRLGKEINDESSVLYWAHKNKIPIFCPAITDGSIGDMLFFHTFKASPKQIRLDIVADIRKINSMSMEASKAGMIILGGGLIKHHIANACLMRNGADYAVYINTGQEFDGSDAGARPDEAVSWGKIKAEAKSVKIYADVTIVFPLIVAATFANGKPLPKN</sequence>
<keyword id="KW-0386">Hypusine biosynthesis</keyword>
<keyword id="KW-0520">NAD</keyword>
<keyword id="KW-1185">Reference proteome</keyword>
<keyword id="KW-0808">Transferase</keyword>
<protein>
    <recommendedName>
        <fullName>Deoxyhypusine synthase</fullName>
        <shortName>DHS</shortName>
        <ecNumber>2.5.1.46</ecNumber>
    </recommendedName>
</protein>
<reference key="1">
    <citation type="journal article" date="2004" name="Nature">
        <title>Genome evolution in yeasts.</title>
        <authorList>
            <person name="Dujon B."/>
            <person name="Sherman D."/>
            <person name="Fischer G."/>
            <person name="Durrens P."/>
            <person name="Casaregola S."/>
            <person name="Lafontaine I."/>
            <person name="de Montigny J."/>
            <person name="Marck C."/>
            <person name="Neuveglise C."/>
            <person name="Talla E."/>
            <person name="Goffard N."/>
            <person name="Frangeul L."/>
            <person name="Aigle M."/>
            <person name="Anthouard V."/>
            <person name="Babour A."/>
            <person name="Barbe V."/>
            <person name="Barnay S."/>
            <person name="Blanchin S."/>
            <person name="Beckerich J.-M."/>
            <person name="Beyne E."/>
            <person name="Bleykasten C."/>
            <person name="Boisrame A."/>
            <person name="Boyer J."/>
            <person name="Cattolico L."/>
            <person name="Confanioleri F."/>
            <person name="de Daruvar A."/>
            <person name="Despons L."/>
            <person name="Fabre E."/>
            <person name="Fairhead C."/>
            <person name="Ferry-Dumazet H."/>
            <person name="Groppi A."/>
            <person name="Hantraye F."/>
            <person name="Hennequin C."/>
            <person name="Jauniaux N."/>
            <person name="Joyet P."/>
            <person name="Kachouri R."/>
            <person name="Kerrest A."/>
            <person name="Koszul R."/>
            <person name="Lemaire M."/>
            <person name="Lesur I."/>
            <person name="Ma L."/>
            <person name="Muller H."/>
            <person name="Nicaud J.-M."/>
            <person name="Nikolski M."/>
            <person name="Oztas S."/>
            <person name="Ozier-Kalogeropoulos O."/>
            <person name="Pellenz S."/>
            <person name="Potier S."/>
            <person name="Richard G.-F."/>
            <person name="Straub M.-L."/>
            <person name="Suleau A."/>
            <person name="Swennen D."/>
            <person name="Tekaia F."/>
            <person name="Wesolowski-Louvel M."/>
            <person name="Westhof E."/>
            <person name="Wirth B."/>
            <person name="Zeniou-Meyer M."/>
            <person name="Zivanovic Y."/>
            <person name="Bolotin-Fukuhara M."/>
            <person name="Thierry A."/>
            <person name="Bouchier C."/>
            <person name="Caudron B."/>
            <person name="Scarpelli C."/>
            <person name="Gaillardin C."/>
            <person name="Weissenbach J."/>
            <person name="Wincker P."/>
            <person name="Souciet J.-L."/>
        </authorList>
    </citation>
    <scope>NUCLEOTIDE SEQUENCE [LARGE SCALE GENOMIC DNA]</scope>
    <source>
        <strain>ATCC 2001 / BCRC 20586 / JCM 3761 / NBRC 0622 / NRRL Y-65 / CBS 138</strain>
    </source>
</reference>
<gene>
    <name type="primary">DYS1</name>
    <name type="ordered locus">CAGL0H07249g</name>
</gene>
<name>DHYS_CANGA</name>
<feature type="chain" id="PRO_0000134481" description="Deoxyhypusine synthase">
    <location>
        <begin position="1"/>
        <end position="385"/>
    </location>
</feature>
<feature type="active site" description="Nucleophile" evidence="1">
    <location>
        <position position="350"/>
    </location>
</feature>
<feature type="binding site" evidence="1">
    <location>
        <begin position="108"/>
        <end position="112"/>
    </location>
    <ligand>
        <name>NAD(+)</name>
        <dbReference type="ChEBI" id="CHEBI:57540"/>
    </ligand>
</feature>
<feature type="binding site" evidence="1">
    <location>
        <begin position="134"/>
        <end position="136"/>
    </location>
    <ligand>
        <name>NAD(+)</name>
        <dbReference type="ChEBI" id="CHEBI:57540"/>
    </ligand>
</feature>
<feature type="binding site" evidence="1">
    <location>
        <begin position="139"/>
        <end position="140"/>
    </location>
    <ligand>
        <name>spermidine</name>
        <dbReference type="ChEBI" id="CHEBI:57834"/>
    </ligand>
</feature>
<feature type="binding site" evidence="1">
    <location>
        <position position="140"/>
    </location>
    <ligand>
        <name>NAD(+)</name>
        <dbReference type="ChEBI" id="CHEBI:57540"/>
    </ligand>
</feature>
<feature type="binding site" evidence="1">
    <location>
        <position position="257"/>
    </location>
    <ligand>
        <name>NAD(+)</name>
        <dbReference type="ChEBI" id="CHEBI:57540"/>
    </ligand>
</feature>
<feature type="binding site" evidence="1">
    <location>
        <position position="262"/>
    </location>
    <ligand>
        <name>spermidine</name>
        <dbReference type="ChEBI" id="CHEBI:57834"/>
    </ligand>
</feature>
<feature type="binding site" evidence="1">
    <location>
        <position position="304"/>
    </location>
    <ligand>
        <name>NAD(+)</name>
        <dbReference type="ChEBI" id="CHEBI:57540"/>
    </ligand>
</feature>
<feature type="binding site" evidence="1">
    <location>
        <position position="309"/>
    </location>
    <ligand>
        <name>spermidine</name>
        <dbReference type="ChEBI" id="CHEBI:57834"/>
    </ligand>
</feature>
<feature type="binding site" evidence="1">
    <location>
        <begin position="329"/>
        <end position="330"/>
    </location>
    <ligand>
        <name>NAD(+)</name>
        <dbReference type="ChEBI" id="CHEBI:57540"/>
    </ligand>
</feature>
<feature type="binding site" evidence="1">
    <location>
        <begin position="335"/>
        <end position="337"/>
    </location>
    <ligand>
        <name>spermidine</name>
        <dbReference type="ChEBI" id="CHEBI:57834"/>
    </ligand>
</feature>
<feature type="binding site" evidence="1">
    <location>
        <begin position="344"/>
        <end position="350"/>
    </location>
    <ligand>
        <name>spermidine</name>
        <dbReference type="ChEBI" id="CHEBI:57834"/>
    </ligand>
</feature>
<feature type="binding site" evidence="1">
    <location>
        <begin position="363"/>
        <end position="364"/>
    </location>
    <ligand>
        <name>NAD(+)</name>
        <dbReference type="ChEBI" id="CHEBI:57540"/>
    </ligand>
</feature>
<dbReference type="EC" id="2.5.1.46"/>
<dbReference type="EMBL" id="CR380954">
    <property type="protein sequence ID" value="CAG60045.1"/>
    <property type="molecule type" value="Genomic_DNA"/>
</dbReference>
<dbReference type="RefSeq" id="XP_447112.1">
    <property type="nucleotide sequence ID" value="XM_447112.1"/>
</dbReference>
<dbReference type="SMR" id="Q6FRN2"/>
<dbReference type="FunCoup" id="Q6FRN2">
    <property type="interactions" value="741"/>
</dbReference>
<dbReference type="STRING" id="284593.Q6FRN2"/>
<dbReference type="EnsemblFungi" id="CAGL0H07249g-T">
    <property type="protein sequence ID" value="CAGL0H07249g-T-p1"/>
    <property type="gene ID" value="CAGL0H07249g"/>
</dbReference>
<dbReference type="GeneID" id="2888516"/>
<dbReference type="KEGG" id="cgr:2888516"/>
<dbReference type="CGD" id="CAL0131840">
    <property type="gene designation" value="DYS1"/>
</dbReference>
<dbReference type="VEuPathDB" id="FungiDB:B1J91_H07249g"/>
<dbReference type="VEuPathDB" id="FungiDB:CAGL0H07249g"/>
<dbReference type="eggNOG" id="KOG2924">
    <property type="taxonomic scope" value="Eukaryota"/>
</dbReference>
<dbReference type="HOGENOM" id="CLU_039781_0_0_1"/>
<dbReference type="InParanoid" id="Q6FRN2"/>
<dbReference type="OMA" id="HSIINAN"/>
<dbReference type="UniPathway" id="UPA00354"/>
<dbReference type="Proteomes" id="UP000002428">
    <property type="component" value="Chromosome H"/>
</dbReference>
<dbReference type="GO" id="GO:0005737">
    <property type="term" value="C:cytoplasm"/>
    <property type="evidence" value="ECO:0007669"/>
    <property type="project" value="TreeGrafter"/>
</dbReference>
<dbReference type="GO" id="GO:0034038">
    <property type="term" value="F:deoxyhypusine synthase activity"/>
    <property type="evidence" value="ECO:0007669"/>
    <property type="project" value="UniProtKB-EC"/>
</dbReference>
<dbReference type="FunFam" id="3.40.910.10:FF:000003">
    <property type="entry name" value="Deoxyhypusine synthase"/>
    <property type="match status" value="1"/>
</dbReference>
<dbReference type="Gene3D" id="3.40.910.10">
    <property type="entry name" value="Deoxyhypusine synthase"/>
    <property type="match status" value="1"/>
</dbReference>
<dbReference type="InterPro" id="IPR002773">
    <property type="entry name" value="Deoxyhypusine_synthase"/>
</dbReference>
<dbReference type="InterPro" id="IPR036982">
    <property type="entry name" value="Deoxyhypusine_synthase_sf"/>
</dbReference>
<dbReference type="InterPro" id="IPR029035">
    <property type="entry name" value="DHS-like_NAD/FAD-binding_dom"/>
</dbReference>
<dbReference type="NCBIfam" id="TIGR00321">
    <property type="entry name" value="dhys"/>
    <property type="match status" value="1"/>
</dbReference>
<dbReference type="PANTHER" id="PTHR11703">
    <property type="entry name" value="DEOXYHYPUSINE SYNTHASE"/>
    <property type="match status" value="1"/>
</dbReference>
<dbReference type="PANTHER" id="PTHR11703:SF0">
    <property type="entry name" value="DEOXYHYPUSINE SYNTHASE"/>
    <property type="match status" value="1"/>
</dbReference>
<dbReference type="Pfam" id="PF01916">
    <property type="entry name" value="DS"/>
    <property type="match status" value="1"/>
</dbReference>
<dbReference type="SUPFAM" id="SSF52467">
    <property type="entry name" value="DHS-like NAD/FAD-binding domain"/>
    <property type="match status" value="1"/>
</dbReference>
<accession>Q6FRN2</accession>